<comment type="function">
    <text evidence="1">F(1)F(0) ATP synthase produces ATP from ADP in the presence of a proton or sodium gradient. F-type ATPases consist of two structural domains, F(1) containing the extramembraneous catalytic core and F(0) containing the membrane proton channel, linked together by a central stalk and a peripheral stalk. During catalysis, ATP synthesis in the catalytic domain of F(1) is coupled via a rotary mechanism of the central stalk subunits to proton translocation.</text>
</comment>
<comment type="function">
    <text evidence="1">This protein is part of the stalk that links CF(0) to CF(1). It either transmits conformational changes from CF(0) to CF(1) or is implicated in proton conduction.</text>
</comment>
<comment type="subunit">
    <text evidence="1">F-type ATPases have 2 components, F(1) - the catalytic core - and F(0) - the membrane proton channel. F(1) has five subunits: alpha(3), beta(3), gamma(1), delta(1), epsilon(1). CF(0) has four main subunits: a(1), b(1), b'(1) and c(10-14). The alpha and beta chains form an alternating ring which encloses part of the gamma chain. F(1) is attached to F(0) by a central stalk formed by the gamma and epsilon chains, while a peripheral stalk is formed by the delta, b and b' chains.</text>
</comment>
<comment type="subcellular location">
    <subcellularLocation>
        <location evidence="1">Plastid</location>
        <location evidence="1">Chloroplast thylakoid membrane</location>
        <topology evidence="1">Peripheral membrane protein</topology>
    </subcellularLocation>
</comment>
<comment type="similarity">
    <text evidence="1">Belongs to the ATPase delta chain family.</text>
</comment>
<organism>
    <name type="scientific">Heterosigma akashiwo (strain NIES-293 / 8280G21-1)</name>
    <dbReference type="NCBI Taxonomy" id="536047"/>
    <lineage>
        <taxon>Eukaryota</taxon>
        <taxon>Sar</taxon>
        <taxon>Stramenopiles</taxon>
        <taxon>Ochrophyta</taxon>
        <taxon>Raphidophyceae</taxon>
        <taxon>Chattonellales</taxon>
        <taxon>Chattonellaceae</taxon>
        <taxon>Heterosigma</taxon>
    </lineage>
</organism>
<name>ATPD_HETA2</name>
<evidence type="ECO:0000255" key="1">
    <source>
        <dbReference type="HAMAP-Rule" id="MF_01416"/>
    </source>
</evidence>
<geneLocation type="chloroplast"/>
<dbReference type="EMBL" id="EU168190">
    <property type="protein sequence ID" value="ABV65987.1"/>
    <property type="molecule type" value="Genomic_DNA"/>
</dbReference>
<dbReference type="RefSeq" id="YP_001936381.1">
    <property type="nucleotide sequence ID" value="NC_010772.1"/>
</dbReference>
<dbReference type="SMR" id="B2XT89"/>
<dbReference type="GeneID" id="6335679"/>
<dbReference type="GO" id="GO:0009535">
    <property type="term" value="C:chloroplast thylakoid membrane"/>
    <property type="evidence" value="ECO:0007669"/>
    <property type="project" value="UniProtKB-SubCell"/>
</dbReference>
<dbReference type="GO" id="GO:0045259">
    <property type="term" value="C:proton-transporting ATP synthase complex"/>
    <property type="evidence" value="ECO:0007669"/>
    <property type="project" value="UniProtKB-KW"/>
</dbReference>
<dbReference type="GO" id="GO:0046933">
    <property type="term" value="F:proton-transporting ATP synthase activity, rotational mechanism"/>
    <property type="evidence" value="ECO:0007669"/>
    <property type="project" value="UniProtKB-UniRule"/>
</dbReference>
<dbReference type="Gene3D" id="1.10.520.20">
    <property type="entry name" value="N-terminal domain of the delta subunit of the F1F0-ATP synthase"/>
    <property type="match status" value="1"/>
</dbReference>
<dbReference type="HAMAP" id="MF_01416">
    <property type="entry name" value="ATP_synth_delta_bact"/>
    <property type="match status" value="1"/>
</dbReference>
<dbReference type="InterPro" id="IPR026015">
    <property type="entry name" value="ATP_synth_OSCP/delta_N_sf"/>
</dbReference>
<dbReference type="InterPro" id="IPR000711">
    <property type="entry name" value="ATPase_OSCP/dsu"/>
</dbReference>
<dbReference type="PANTHER" id="PTHR11910">
    <property type="entry name" value="ATP SYNTHASE DELTA CHAIN"/>
    <property type="match status" value="1"/>
</dbReference>
<dbReference type="Pfam" id="PF00213">
    <property type="entry name" value="OSCP"/>
    <property type="match status" value="1"/>
</dbReference>
<dbReference type="SUPFAM" id="SSF47928">
    <property type="entry name" value="N-terminal domain of the delta subunit of the F1F0-ATP synthase"/>
    <property type="match status" value="1"/>
</dbReference>
<feature type="chain" id="PRO_0000371215" description="ATP synthase subunit delta, chloroplastic">
    <location>
        <begin position="1"/>
        <end position="203"/>
    </location>
</feature>
<accession>B2XT89</accession>
<sequence length="203" mass="23059">MSTNSRAGDAYAYALLKVLFNETKDFDSFSDLVGDVLDFVTIFNTCPSIEEFFANPTYSPIQKKQFLYDFFGRSLNPILMSFLYLLCDTKRIIYISSIISIFLETLLKNTNSHIVEVQTPTGKDYKLDISKLETTLSGWFNKIQKNNDEAVNFLNFDESLVIFTVKEVPGLLGGFRLNFVTDSKVIDFSIAGKIKRLAAVLNY</sequence>
<reference key="1">
    <citation type="journal article" date="2008" name="BMC Genomics">
        <title>Chloroplast genome sequencing analysis of Heterosigma akashiwo CCMP452 (West Atlantic) and NIES293 (West Pacific) strains.</title>
        <authorList>
            <person name="Cattolico R.A."/>
            <person name="Jacobs M.A."/>
            <person name="Zhou Y."/>
            <person name="Chang J."/>
            <person name="Duplessis M."/>
            <person name="Lybrand T."/>
            <person name="McKay J."/>
            <person name="Ong H.C."/>
            <person name="Sims E."/>
            <person name="Rocap G."/>
        </authorList>
    </citation>
    <scope>NUCLEOTIDE SEQUENCE [LARGE SCALE GENOMIC DNA]</scope>
</reference>
<protein>
    <recommendedName>
        <fullName evidence="1">ATP synthase subunit delta, chloroplastic</fullName>
    </recommendedName>
    <alternativeName>
        <fullName evidence="1">ATP synthase F(1) sector subunit delta</fullName>
    </alternativeName>
    <alternativeName>
        <fullName evidence="1">F-type ATPase subunit delta</fullName>
    </alternativeName>
</protein>
<proteinExistence type="inferred from homology"/>
<gene>
    <name evidence="1" type="primary">atpD</name>
    <name type="ordered locus">Heak293_Cp080</name>
</gene>
<keyword id="KW-0066">ATP synthesis</keyword>
<keyword id="KW-0139">CF(1)</keyword>
<keyword id="KW-0150">Chloroplast</keyword>
<keyword id="KW-0375">Hydrogen ion transport</keyword>
<keyword id="KW-0406">Ion transport</keyword>
<keyword id="KW-0472">Membrane</keyword>
<keyword id="KW-0934">Plastid</keyword>
<keyword id="KW-0793">Thylakoid</keyword>
<keyword id="KW-0813">Transport</keyword>